<protein>
    <recommendedName>
        <fullName evidence="1">RNA-binding protein RMD9, mitochondrial</fullName>
    </recommendedName>
</protein>
<proteinExistence type="inferred from homology"/>
<comment type="function">
    <text evidence="1">Binds the 3'-UTR of mitochondrial mRNAs (By similarity). Involved in the processing or stability of mitochondrial mRNAs (By similarity).</text>
</comment>
<comment type="subunit">
    <text evidence="1">Monomer.</text>
</comment>
<comment type="subcellular location">
    <subcellularLocation>
        <location evidence="1">Mitochondrion inner membrane</location>
        <topology evidence="1">Peripheral membrane protein</topology>
        <orientation evidence="1">Matrix side</orientation>
    </subcellularLocation>
</comment>
<comment type="PTM">
    <text evidence="1">Phosphorylated. Phosphorylation promotes binding to RNA.</text>
</comment>
<comment type="similarity">
    <text evidence="4">Belongs to the RMD9 family.</text>
</comment>
<dbReference type="EMBL" id="CP017625">
    <property type="protein sequence ID" value="AOW28676.1"/>
    <property type="molecule type" value="Genomic_DNA"/>
</dbReference>
<dbReference type="RefSeq" id="XP_716120.1">
    <property type="nucleotide sequence ID" value="XM_711027.1"/>
</dbReference>
<dbReference type="SMR" id="Q5A2V2"/>
<dbReference type="BioGRID" id="1225341">
    <property type="interactions" value="1"/>
</dbReference>
<dbReference type="FunCoup" id="Q5A2V2">
    <property type="interactions" value="71"/>
</dbReference>
<dbReference type="STRING" id="237561.Q5A2V2"/>
<dbReference type="EnsemblFungi" id="C3_06700C_A-T">
    <property type="protein sequence ID" value="C3_06700C_A-T-p1"/>
    <property type="gene ID" value="C3_06700C_A"/>
</dbReference>
<dbReference type="GeneID" id="3642247"/>
<dbReference type="KEGG" id="cal:CAALFM_C306700CA"/>
<dbReference type="CGD" id="CAL0000189293">
    <property type="gene designation" value="orf19.7459"/>
</dbReference>
<dbReference type="VEuPathDB" id="FungiDB:C3_06700C_A"/>
<dbReference type="eggNOG" id="ENOG502QUSW">
    <property type="taxonomic scope" value="Eukaryota"/>
</dbReference>
<dbReference type="HOGENOM" id="CLU_019840_1_0_1"/>
<dbReference type="InParanoid" id="Q5A2V2"/>
<dbReference type="OMA" id="WENGVND"/>
<dbReference type="OrthoDB" id="4081443at2759"/>
<dbReference type="Proteomes" id="UP000000559">
    <property type="component" value="Chromosome 3"/>
</dbReference>
<dbReference type="GO" id="GO:0005743">
    <property type="term" value="C:mitochondrial inner membrane"/>
    <property type="evidence" value="ECO:0007669"/>
    <property type="project" value="UniProtKB-SubCell"/>
</dbReference>
<dbReference type="GO" id="GO:0044182">
    <property type="term" value="P:filamentous growth of a population of unicellular organisms"/>
    <property type="evidence" value="ECO:0000315"/>
    <property type="project" value="CGD"/>
</dbReference>
<dbReference type="GO" id="GO:0036178">
    <property type="term" value="P:filamentous growth of a population of unicellular organisms in response to neutral pH"/>
    <property type="evidence" value="ECO:0000315"/>
    <property type="project" value="CGD"/>
</dbReference>
<dbReference type="GO" id="GO:0044011">
    <property type="term" value="P:single-species biofilm formation on inanimate substrate"/>
    <property type="evidence" value="ECO:0000315"/>
    <property type="project" value="CGD"/>
</dbReference>
<dbReference type="GO" id="GO:0030435">
    <property type="term" value="P:sporulation resulting in formation of a cellular spore"/>
    <property type="evidence" value="ECO:0007669"/>
    <property type="project" value="UniProtKB-KW"/>
</dbReference>
<dbReference type="Gene3D" id="1.25.40.10">
    <property type="entry name" value="Tetratricopeptide repeat domain"/>
    <property type="match status" value="1"/>
</dbReference>
<dbReference type="InterPro" id="IPR011990">
    <property type="entry name" value="TPR-like_helical_dom_sf"/>
</dbReference>
<organism>
    <name type="scientific">Candida albicans (strain SC5314 / ATCC MYA-2876)</name>
    <name type="common">Yeast</name>
    <dbReference type="NCBI Taxonomy" id="237561"/>
    <lineage>
        <taxon>Eukaryota</taxon>
        <taxon>Fungi</taxon>
        <taxon>Dikarya</taxon>
        <taxon>Ascomycota</taxon>
        <taxon>Saccharomycotina</taxon>
        <taxon>Pichiomycetes</taxon>
        <taxon>Debaryomycetaceae</taxon>
        <taxon>Candida/Lodderomyces clade</taxon>
        <taxon>Candida</taxon>
    </lineage>
</organism>
<gene>
    <name type="primary">RMD9</name>
    <name type="ordered locus">CAALFM_C306700CA</name>
    <name type="ORF">CaO19.7459</name>
</gene>
<name>RMD9_CANAL</name>
<keyword id="KW-0472">Membrane</keyword>
<keyword id="KW-0496">Mitochondrion</keyword>
<keyword id="KW-0999">Mitochondrion inner membrane</keyword>
<keyword id="KW-0597">Phosphoprotein</keyword>
<keyword id="KW-1185">Reference proteome</keyword>
<keyword id="KW-0749">Sporulation</keyword>
<keyword id="KW-0809">Transit peptide</keyword>
<feature type="transit peptide" description="Mitochondrion" evidence="2">
    <location>
        <begin position="1"/>
        <end position="58"/>
    </location>
</feature>
<feature type="chain" id="PRO_0000301782" description="RNA-binding protein RMD9, mitochondrial">
    <location>
        <begin position="59"/>
        <end position="613"/>
    </location>
</feature>
<feature type="region of interest" description="Disordered" evidence="3">
    <location>
        <begin position="15"/>
        <end position="39"/>
    </location>
</feature>
<feature type="compositionally biased region" description="Low complexity" evidence="3">
    <location>
        <begin position="25"/>
        <end position="39"/>
    </location>
</feature>
<reference key="1">
    <citation type="journal article" date="2004" name="Proc. Natl. Acad. Sci. U.S.A.">
        <title>The diploid genome sequence of Candida albicans.</title>
        <authorList>
            <person name="Jones T."/>
            <person name="Federspiel N.A."/>
            <person name="Chibana H."/>
            <person name="Dungan J."/>
            <person name="Kalman S."/>
            <person name="Magee B.B."/>
            <person name="Newport G."/>
            <person name="Thorstenson Y.R."/>
            <person name="Agabian N."/>
            <person name="Magee P.T."/>
            <person name="Davis R.W."/>
            <person name="Scherer S."/>
        </authorList>
    </citation>
    <scope>NUCLEOTIDE SEQUENCE [LARGE SCALE GENOMIC DNA]</scope>
    <source>
        <strain>SC5314 / ATCC MYA-2876</strain>
    </source>
</reference>
<reference key="2">
    <citation type="journal article" date="2007" name="Genome Biol.">
        <title>Assembly of the Candida albicans genome into sixteen supercontigs aligned on the eight chromosomes.</title>
        <authorList>
            <person name="van het Hoog M."/>
            <person name="Rast T.J."/>
            <person name="Martchenko M."/>
            <person name="Grindle S."/>
            <person name="Dignard D."/>
            <person name="Hogues H."/>
            <person name="Cuomo C."/>
            <person name="Berriman M."/>
            <person name="Scherer S."/>
            <person name="Magee B.B."/>
            <person name="Whiteway M."/>
            <person name="Chibana H."/>
            <person name="Nantel A."/>
            <person name="Magee P.T."/>
        </authorList>
    </citation>
    <scope>GENOME REANNOTATION</scope>
    <source>
        <strain>SC5314 / ATCC MYA-2876</strain>
    </source>
</reference>
<reference key="3">
    <citation type="journal article" date="2013" name="Genome Biol.">
        <title>Assembly of a phased diploid Candida albicans genome facilitates allele-specific measurements and provides a simple model for repeat and indel structure.</title>
        <authorList>
            <person name="Muzzey D."/>
            <person name="Schwartz K."/>
            <person name="Weissman J.S."/>
            <person name="Sherlock G."/>
        </authorList>
    </citation>
    <scope>NUCLEOTIDE SEQUENCE [LARGE SCALE GENOMIC DNA]</scope>
    <scope>GENOME REANNOTATION</scope>
    <source>
        <strain>SC5314 / ATCC MYA-2876</strain>
    </source>
</reference>
<accession>Q5A2V2</accession>
<accession>A0A1D8PKK8</accession>
<evidence type="ECO:0000250" key="1">
    <source>
        <dbReference type="UniProtKB" id="P53140"/>
    </source>
</evidence>
<evidence type="ECO:0000255" key="2"/>
<evidence type="ECO:0000256" key="3">
    <source>
        <dbReference type="SAM" id="MobiDB-lite"/>
    </source>
</evidence>
<evidence type="ECO:0000305" key="4"/>
<sequence>MFRLIASGAQQGLRPSLISKVKPPTTTTTTSTTSKFTSTTQHFPFENNNLLGYQVRNNSSQAGVASEPKISLPETDVYQQKLLKYNIKKHEPYHLKFNPKTKNQRNNDSASSFSIDEFSQLLQDETFRNQLNEKHLFVYASNLYSGTINSRRARLNKSKNRDKDQRSAFREDMTLQSAVLNLTEIISTGELNSVLSARTLFKVFGTLLQFKLNDEIVNLWETGVNSDVGKLYLAHEVLSIVIQVGHETRRFNYDEIKQIYEMSVKEDKTVHPYLSDRMGQVAVMEGDYVTALDALESLMNLYEQNPNEKSVLGALAQIHLSFIGHSKDLAIAERFFEKGLQKEGLPYSVIMKAPYMTSFLSNCIAGGYSMEEVIDFWRRISKHYLEQDFDLISSQSTLHAGFFKSFFEKYPEPSKEAIDLLNLAIESAPKVNEVLLNTLISNLPWADKEIFNKLLNLYQEKNVTKSIVSHRIILKQSKQIEYTNEEILQLWNELLGKLDEAGYTYIANADWSALRASTMFSGKFSYQRTGLYLSVLGKYKDYMQNNFAAIQFLRNWVRDANAYRLISKITLEENPQFDGAIKVDIPEFDSLRPNINYREVTKQVTDADPRLLE</sequence>